<reference key="1">
    <citation type="journal article" date="1990" name="Virology">
        <title>Nucleotide sequence and genome organization of biologically active proviruses of the bovine immunodeficiency-like virus.</title>
        <authorList>
            <person name="Garvey K.J."/>
            <person name="Oberste M.S."/>
            <person name="Elser J.E."/>
            <person name="Braun M.J."/>
            <person name="Gonda M.A."/>
        </authorList>
    </citation>
    <scope>NUCLEOTIDE SEQUENCE [GENOMIC RNA]</scope>
    <source>
        <strain>Isolate R29-106</strain>
        <strain>Isolate R29-127</strain>
    </source>
</reference>
<reference key="2">
    <citation type="submission" date="1992-10" db="EMBL/GenBank/DDBJ databases">
        <title>Isolation and characterization of cDNAs encoding rev and tat of bovine immunodeficiency-like virus.</title>
        <authorList>
            <person name="Nadin-Davis S.A."/>
            <person name="Chang S.C."/>
            <person name="Roth J.A."/>
            <person name="Carpenter S."/>
        </authorList>
    </citation>
    <scope>NUCLEOTIDE SEQUENCE [MRNA]</scope>
    <source>
        <strain>Isolate R29-Nadin</strain>
    </source>
</reference>
<gene>
    <name type="primary">vif</name>
</gene>
<feature type="chain" id="PRO_0000085498" description="Virion infectivity factor">
    <location>
        <begin position="1"/>
        <end position="198"/>
    </location>
</feature>
<feature type="region of interest" description="Disordered" evidence="2">
    <location>
        <begin position="1"/>
        <end position="31"/>
    </location>
</feature>
<feature type="compositionally biased region" description="Basic residues" evidence="2">
    <location>
        <begin position="10"/>
        <end position="21"/>
    </location>
</feature>
<feature type="sequence variant" description="In strain: Isolate R29-Nadin.">
    <original>T</original>
    <variation>P</variation>
    <location>
        <position position="4"/>
    </location>
</feature>
<feature type="sequence variant" description="In strain: Isolate R29-Nadin.">
    <original>T</original>
    <variation>I</variation>
    <location>
        <position position="66"/>
    </location>
</feature>
<feature type="sequence variant" description="In strain: Isolate R29-Nadin.">
    <original>E</original>
    <variation>K</variation>
    <location>
        <position position="79"/>
    </location>
</feature>
<feature type="sequence variant" description="In strain: Isolate R29-106.">
    <original>D</original>
    <variation>N</variation>
    <location>
        <position position="84"/>
    </location>
</feature>
<feature type="sequence variant" description="In strain: Isolate R29-Nadin.">
    <original>T</original>
    <variation>A</variation>
    <location>
        <position position="127"/>
    </location>
</feature>
<evidence type="ECO:0000250" key="1"/>
<evidence type="ECO:0000256" key="2">
    <source>
        <dbReference type="SAM" id="MobiDB-lite"/>
    </source>
</evidence>
<sequence length="198" mass="22828">MERTLQSVVGRRRGSSNRGRGKNSLISTPSYALHPPPRFRYPRWEFVRQTEYSMTACVRKGKLVLTYQYAIWKRVWTIETGFTDPSLFMTPAGTHTTEEIGHLDLFWLRYCSCPHEMPPWLDFLRGTLNLRISCRRALQASVLTSTPRHSLQRLAALQLCTNACLCWYPLGRINDTTPLWLNFSSGKEPTIQQLSGHP</sequence>
<organism>
    <name type="scientific">Bovine immunodeficiency virus (strain R29)</name>
    <name type="common">BIV</name>
    <name type="synonym">Bovine immunodeficiency-like virus</name>
    <dbReference type="NCBI Taxonomy" id="417296"/>
    <lineage>
        <taxon>Viruses</taxon>
        <taxon>Riboviria</taxon>
        <taxon>Pararnavirae</taxon>
        <taxon>Artverviricota</taxon>
        <taxon>Revtraviricetes</taxon>
        <taxon>Ortervirales</taxon>
        <taxon>Retroviridae</taxon>
        <taxon>Orthoretrovirinae</taxon>
        <taxon>Lentivirus</taxon>
        <taxon>Bovine immunodeficiency virus</taxon>
    </lineage>
</organism>
<proteinExistence type="evidence at transcript level"/>
<organismHost>
    <name type="scientific">Bos taurus</name>
    <name type="common">Bovine</name>
    <dbReference type="NCBI Taxonomy" id="9913"/>
</organismHost>
<name>VIF_BIV29</name>
<accession>P19563</accession>
<accession>P19562</accession>
<accession>Q65591</accession>
<accession>Q65594</accession>
<dbReference type="EMBL" id="M32690">
    <property type="protein sequence ID" value="AAA91272.1"/>
    <property type="molecule type" value="Genomic_RNA"/>
</dbReference>
<dbReference type="EMBL" id="L04972">
    <property type="protein sequence ID" value="AAA42768.1"/>
    <property type="molecule type" value="Genomic_DNA"/>
</dbReference>
<dbReference type="EMBL" id="L04974">
    <property type="protein sequence ID" value="AAA42764.1"/>
    <property type="molecule type" value="Genomic_DNA"/>
</dbReference>
<dbReference type="PIR" id="C34742">
    <property type="entry name" value="ASLJBT"/>
</dbReference>
<dbReference type="RefSeq" id="NP_040564.1">
    <property type="nucleotide sequence ID" value="NC_001413.1"/>
</dbReference>
<dbReference type="KEGG" id="vg:1724697"/>
<dbReference type="Proteomes" id="UP000243495">
    <property type="component" value="Segment"/>
</dbReference>
<dbReference type="GO" id="GO:0030430">
    <property type="term" value="C:host cell cytoplasm"/>
    <property type="evidence" value="ECO:0007669"/>
    <property type="project" value="UniProtKB-SubCell"/>
</dbReference>
<dbReference type="GO" id="GO:0044423">
    <property type="term" value="C:virion component"/>
    <property type="evidence" value="ECO:0007669"/>
    <property type="project" value="UniProtKB-KW"/>
</dbReference>
<dbReference type="InterPro" id="IPR009979">
    <property type="entry name" value="Lenti_VIF_2"/>
</dbReference>
<dbReference type="Pfam" id="PF07401">
    <property type="entry name" value="Lenti_VIF_2"/>
    <property type="match status" value="1"/>
</dbReference>
<dbReference type="PIRSF" id="PIRSF003854">
    <property type="entry name" value="Lenti_VIF_2"/>
    <property type="match status" value="1"/>
</dbReference>
<protein>
    <recommendedName>
        <fullName>Virion infectivity factor</fullName>
    </recommendedName>
    <alternativeName>
        <fullName>Q protein</fullName>
    </alternativeName>
</protein>
<comment type="function">
    <text>Determines virus infectivity.</text>
</comment>
<comment type="subcellular location">
    <subcellularLocation>
        <location evidence="1">Host cytoplasm</location>
    </subcellularLocation>
    <subcellularLocation>
        <location evidence="1">Virion</location>
    </subcellularLocation>
</comment>
<comment type="miscellaneous">
    <text>The sequence shown is that of isolate R29-127.</text>
</comment>
<keyword id="KW-1035">Host cytoplasm</keyword>
<keyword id="KW-0946">Virion</keyword>